<evidence type="ECO:0000255" key="1">
    <source>
        <dbReference type="HAMAP-Rule" id="MF_01820"/>
    </source>
</evidence>
<evidence type="ECO:0000255" key="2">
    <source>
        <dbReference type="PROSITE-ProRule" id="PRU01058"/>
    </source>
</evidence>
<organism>
    <name type="scientific">Thermotoga neapolitana (strain ATCC 49049 / DSM 4359 / NBRC 107923 / NS-E)</name>
    <dbReference type="NCBI Taxonomy" id="309803"/>
    <lineage>
        <taxon>Bacteria</taxon>
        <taxon>Thermotogati</taxon>
        <taxon>Thermotogota</taxon>
        <taxon>Thermotogae</taxon>
        <taxon>Thermotogales</taxon>
        <taxon>Thermotogaceae</taxon>
        <taxon>Thermotoga</taxon>
    </lineage>
</organism>
<comment type="function">
    <text evidence="1">One of several proteins that assist in the late maturation steps of the functional core of the 30S ribosomal subunit. Helps release RbfA from mature subunits. May play a role in the assembly of ribosomal proteins into the subunit. Circularly permuted GTPase that catalyzes slow GTP hydrolysis, GTPase activity is stimulated by the 30S ribosomal subunit.</text>
</comment>
<comment type="cofactor">
    <cofactor evidence="1">
        <name>Zn(2+)</name>
        <dbReference type="ChEBI" id="CHEBI:29105"/>
    </cofactor>
    <text evidence="1">Binds 1 zinc ion per subunit.</text>
</comment>
<comment type="subunit">
    <text evidence="1">Monomer. Associates with 30S ribosomal subunit, binds 16S rRNA.</text>
</comment>
<comment type="subcellular location">
    <subcellularLocation>
        <location evidence="1">Cytoplasm</location>
    </subcellularLocation>
</comment>
<comment type="similarity">
    <text evidence="1">Belongs to the TRAFAC class YlqF/YawG GTPase family. RsgA subfamily.</text>
</comment>
<reference key="1">
    <citation type="submission" date="2007-11" db="EMBL/GenBank/DDBJ databases">
        <title>The genome sequence of the hyperthermophilic bacterium Thermotoga neapolitana.</title>
        <authorList>
            <person name="Lim S.K."/>
            <person name="Kim J.S."/>
            <person name="Cha S.H."/>
            <person name="Park B.C."/>
            <person name="Lee D.S."/>
            <person name="Tae H.S."/>
            <person name="Kim S.-J."/>
            <person name="Kim J.J."/>
            <person name="Park K.J."/>
            <person name="Lee S.Y."/>
        </authorList>
    </citation>
    <scope>NUCLEOTIDE SEQUENCE [LARGE SCALE GENOMIC DNA]</scope>
    <source>
        <strain>ATCC 49049 / DSM 4359 / NBRC 107923 / NS-E</strain>
    </source>
</reference>
<proteinExistence type="inferred from homology"/>
<gene>
    <name evidence="1" type="primary">rsgA</name>
    <name type="ordered locus">CTN_0905</name>
</gene>
<dbReference type="EC" id="3.6.1.-" evidence="1"/>
<dbReference type="EMBL" id="CP000916">
    <property type="protein sequence ID" value="ACM23081.1"/>
    <property type="molecule type" value="Genomic_DNA"/>
</dbReference>
<dbReference type="RefSeq" id="WP_015919398.1">
    <property type="nucleotide sequence ID" value="NC_011978.1"/>
</dbReference>
<dbReference type="SMR" id="B9K7Z8"/>
<dbReference type="STRING" id="309803.CTN_0905"/>
<dbReference type="KEGG" id="tna:CTN_0905"/>
<dbReference type="eggNOG" id="COG1162">
    <property type="taxonomic scope" value="Bacteria"/>
</dbReference>
<dbReference type="HOGENOM" id="CLU_033617_2_1_0"/>
<dbReference type="Proteomes" id="UP000000445">
    <property type="component" value="Chromosome"/>
</dbReference>
<dbReference type="GO" id="GO:0005737">
    <property type="term" value="C:cytoplasm"/>
    <property type="evidence" value="ECO:0007669"/>
    <property type="project" value="UniProtKB-SubCell"/>
</dbReference>
<dbReference type="GO" id="GO:0005525">
    <property type="term" value="F:GTP binding"/>
    <property type="evidence" value="ECO:0007669"/>
    <property type="project" value="UniProtKB-UniRule"/>
</dbReference>
<dbReference type="GO" id="GO:0003924">
    <property type="term" value="F:GTPase activity"/>
    <property type="evidence" value="ECO:0007669"/>
    <property type="project" value="UniProtKB-UniRule"/>
</dbReference>
<dbReference type="GO" id="GO:0046872">
    <property type="term" value="F:metal ion binding"/>
    <property type="evidence" value="ECO:0007669"/>
    <property type="project" value="UniProtKB-KW"/>
</dbReference>
<dbReference type="GO" id="GO:0019843">
    <property type="term" value="F:rRNA binding"/>
    <property type="evidence" value="ECO:0007669"/>
    <property type="project" value="UniProtKB-KW"/>
</dbReference>
<dbReference type="GO" id="GO:0042274">
    <property type="term" value="P:ribosomal small subunit biogenesis"/>
    <property type="evidence" value="ECO:0007669"/>
    <property type="project" value="UniProtKB-UniRule"/>
</dbReference>
<dbReference type="CDD" id="cd04466">
    <property type="entry name" value="S1_YloQ_GTPase"/>
    <property type="match status" value="1"/>
</dbReference>
<dbReference type="CDD" id="cd01854">
    <property type="entry name" value="YjeQ_EngC"/>
    <property type="match status" value="1"/>
</dbReference>
<dbReference type="Gene3D" id="2.40.50.140">
    <property type="entry name" value="Nucleic acid-binding proteins"/>
    <property type="match status" value="1"/>
</dbReference>
<dbReference type="Gene3D" id="3.40.50.300">
    <property type="entry name" value="P-loop containing nucleotide triphosphate hydrolases"/>
    <property type="match status" value="1"/>
</dbReference>
<dbReference type="Gene3D" id="1.10.40.50">
    <property type="entry name" value="Probable gtpase engc, domain 3"/>
    <property type="match status" value="1"/>
</dbReference>
<dbReference type="HAMAP" id="MF_01820">
    <property type="entry name" value="GTPase_RsgA"/>
    <property type="match status" value="1"/>
</dbReference>
<dbReference type="InterPro" id="IPR030378">
    <property type="entry name" value="G_CP_dom"/>
</dbReference>
<dbReference type="InterPro" id="IPR012340">
    <property type="entry name" value="NA-bd_OB-fold"/>
</dbReference>
<dbReference type="InterPro" id="IPR027417">
    <property type="entry name" value="P-loop_NTPase"/>
</dbReference>
<dbReference type="InterPro" id="IPR004881">
    <property type="entry name" value="Ribosome_biogen_GTPase_RsgA"/>
</dbReference>
<dbReference type="InterPro" id="IPR010914">
    <property type="entry name" value="RsgA_GTPase_dom"/>
</dbReference>
<dbReference type="InterPro" id="IPR031944">
    <property type="entry name" value="RsgA_N"/>
</dbReference>
<dbReference type="NCBIfam" id="TIGR00157">
    <property type="entry name" value="ribosome small subunit-dependent GTPase A"/>
    <property type="match status" value="1"/>
</dbReference>
<dbReference type="PANTHER" id="PTHR32120">
    <property type="entry name" value="SMALL RIBOSOMAL SUBUNIT BIOGENESIS GTPASE RSGA"/>
    <property type="match status" value="1"/>
</dbReference>
<dbReference type="PANTHER" id="PTHR32120:SF11">
    <property type="entry name" value="SMALL RIBOSOMAL SUBUNIT BIOGENESIS GTPASE RSGA 1, MITOCHONDRIAL-RELATED"/>
    <property type="match status" value="1"/>
</dbReference>
<dbReference type="Pfam" id="PF03193">
    <property type="entry name" value="RsgA_GTPase"/>
    <property type="match status" value="1"/>
</dbReference>
<dbReference type="Pfam" id="PF16745">
    <property type="entry name" value="RsgA_N"/>
    <property type="match status" value="1"/>
</dbReference>
<dbReference type="SUPFAM" id="SSF50249">
    <property type="entry name" value="Nucleic acid-binding proteins"/>
    <property type="match status" value="1"/>
</dbReference>
<dbReference type="SUPFAM" id="SSF52540">
    <property type="entry name" value="P-loop containing nucleoside triphosphate hydrolases"/>
    <property type="match status" value="1"/>
</dbReference>
<dbReference type="PROSITE" id="PS50936">
    <property type="entry name" value="ENGC_GTPASE"/>
    <property type="match status" value="1"/>
</dbReference>
<dbReference type="PROSITE" id="PS51721">
    <property type="entry name" value="G_CP"/>
    <property type="match status" value="1"/>
</dbReference>
<name>RSGA_THENN</name>
<feature type="chain" id="PRO_1000188146" description="Small ribosomal subunit biogenesis GTPase RsgA">
    <location>
        <begin position="1"/>
        <end position="295"/>
    </location>
</feature>
<feature type="domain" description="CP-type G" evidence="2">
    <location>
        <begin position="68"/>
        <end position="228"/>
    </location>
</feature>
<feature type="binding site" evidence="1">
    <location>
        <begin position="117"/>
        <end position="120"/>
    </location>
    <ligand>
        <name>GTP</name>
        <dbReference type="ChEBI" id="CHEBI:37565"/>
    </ligand>
</feature>
<feature type="binding site" evidence="1">
    <location>
        <begin position="170"/>
        <end position="178"/>
    </location>
    <ligand>
        <name>GTP</name>
        <dbReference type="ChEBI" id="CHEBI:37565"/>
    </ligand>
</feature>
<feature type="binding site" evidence="1">
    <location>
        <position position="250"/>
    </location>
    <ligand>
        <name>Zn(2+)</name>
        <dbReference type="ChEBI" id="CHEBI:29105"/>
    </ligand>
</feature>
<feature type="binding site" evidence="1">
    <location>
        <position position="255"/>
    </location>
    <ligand>
        <name>Zn(2+)</name>
        <dbReference type="ChEBI" id="CHEBI:29105"/>
    </ligand>
</feature>
<feature type="binding site" evidence="1">
    <location>
        <position position="257"/>
    </location>
    <ligand>
        <name>Zn(2+)</name>
        <dbReference type="ChEBI" id="CHEBI:29105"/>
    </ligand>
</feature>
<feature type="binding site" evidence="1">
    <location>
        <position position="263"/>
    </location>
    <ligand>
        <name>Zn(2+)</name>
        <dbReference type="ChEBI" id="CHEBI:29105"/>
    </ligand>
</feature>
<protein>
    <recommendedName>
        <fullName evidence="1">Small ribosomal subunit biogenesis GTPase RsgA</fullName>
        <ecNumber evidence="1">3.6.1.-</ecNumber>
    </recommendedName>
</protein>
<keyword id="KW-0963">Cytoplasm</keyword>
<keyword id="KW-0342">GTP-binding</keyword>
<keyword id="KW-0378">Hydrolase</keyword>
<keyword id="KW-0479">Metal-binding</keyword>
<keyword id="KW-0547">Nucleotide-binding</keyword>
<keyword id="KW-0690">Ribosome biogenesis</keyword>
<keyword id="KW-0694">RNA-binding</keyword>
<keyword id="KW-0699">rRNA-binding</keyword>
<keyword id="KW-0862">Zinc</keyword>
<accession>B9K7Z8</accession>
<sequence>MILRRRGIVLSFHSNMVTVEDEETGERLLCKLRGKFRLQNLKIYVGDRVEYTPDGTGSGVIENVLHRKNLLVKPHVANVDQAILVVTVKMPETSTYIIDKFLVLTEKNELETVLVINKMDIYDEEDLEKVKELERIYSKLYPIVKTSAKTGMGIEELKKYLKGKISTMAGLSGVGKSSLLNAINPGLKLRVSEVSQKLQRGRHTTTSAQLLRFDFGGYVVDTPGFANLEIGDIEPEELKYYFKEFNEKQCFFSDCNHIDEPECGVKEAVENGEIAESRYENYVKMFHELLGRGKS</sequence>